<organism>
    <name type="scientific">Gallus gallus</name>
    <name type="common">Chicken</name>
    <dbReference type="NCBI Taxonomy" id="9031"/>
    <lineage>
        <taxon>Eukaryota</taxon>
        <taxon>Metazoa</taxon>
        <taxon>Chordata</taxon>
        <taxon>Craniata</taxon>
        <taxon>Vertebrata</taxon>
        <taxon>Euteleostomi</taxon>
        <taxon>Archelosauria</taxon>
        <taxon>Archosauria</taxon>
        <taxon>Dinosauria</taxon>
        <taxon>Saurischia</taxon>
        <taxon>Theropoda</taxon>
        <taxon>Coelurosauria</taxon>
        <taxon>Aves</taxon>
        <taxon>Neognathae</taxon>
        <taxon>Galloanserae</taxon>
        <taxon>Galliformes</taxon>
        <taxon>Phasianidae</taxon>
        <taxon>Phasianinae</taxon>
        <taxon>Gallus</taxon>
    </lineage>
</organism>
<gene>
    <name type="primary">LRP1</name>
</gene>
<comment type="function">
    <text evidence="2">Endocytic receptor involved in endocytosis and in phagocytosis of apoptotic cells. Involved in cellular lipid homeostasis. Involved in the plasma clearance of chylomicron remnants and activated LRPAP1 (alpha 2-macroglobulin), as well as the local metabolism of complexes between plasminogen activators and their endogenous inhibitors. Acts as an alpha-2-macroglobulin receptor.</text>
</comment>
<comment type="subunit">
    <text>Binds vitellogenin and LRPAP1 (alpha 2-macroglobulin).</text>
</comment>
<comment type="subcellular location">
    <subcellularLocation>
        <location>Membrane</location>
        <topology>Single-pass type I membrane protein</topology>
    </subcellularLocation>
    <subcellularLocation>
        <location>Membrane</location>
        <location>Coated pit</location>
    </subcellularLocation>
</comment>
<comment type="alternative products">
    <event type="alternative splicing"/>
    <isoform>
        <id>P98157-1</id>
        <name>1</name>
        <sequence type="displayed"/>
    </isoform>
    <isoform>
        <id>P98157-2</id>
        <name>2</name>
        <sequence type="described" ref="VSP_004312"/>
    </isoform>
</comment>
<comment type="tissue specificity">
    <text>Somatic.</text>
</comment>
<comment type="PTM">
    <text>Cleaved into a 85 kDa membrane-spanning subunit (LRP-85) and a 515 kDa large extracellular domain (LRP-515) that remains non-covalently associated.</text>
</comment>
<comment type="similarity">
    <text evidence="8">Belongs to the LDLR family.</text>
</comment>
<proteinExistence type="evidence at transcript level"/>
<accession>P98157</accession>
<reference key="1">
    <citation type="journal article" date="1994" name="J. Biol. Chem.">
        <title>The somatic cell-specific low density lipoprotein receptor-related protein of the chicken. Close kinship to mammalian low density lipoprotein receptor gene family members.</title>
        <authorList>
            <person name="Nimpf J."/>
            <person name="Stifani S."/>
            <person name="Bilous P.T."/>
            <person name="Schneider W.J."/>
        </authorList>
    </citation>
    <scope>NUCLEOTIDE SEQUENCE [MRNA] (ISOFORMS 1 AND 2)</scope>
    <source>
        <strain>White leghorn</strain>
        <tissue>Liver</tissue>
        <tissue>Ovary</tissue>
    </source>
</reference>
<reference key="2">
    <citation type="journal article" date="1998" name="J. Mol. Biol.">
        <title>An extracellular beta-propeller module predicted in lipoprotein and scavenger receptors, tyrosine kinases, epidermal growth factor precursor, and extracellular matrix components.</title>
        <authorList>
            <person name="Springer T.A."/>
        </authorList>
    </citation>
    <scope>3D-STRUCTURE MODELING</scope>
</reference>
<feature type="signal peptide" evidence="3">
    <location>
        <begin position="1"/>
        <end position="21"/>
    </location>
</feature>
<feature type="chain" id="PRO_0000017318" description="Low-density lipoprotein receptor-related protein 1">
    <location>
        <begin position="22"/>
        <end position="4543"/>
    </location>
</feature>
<feature type="topological domain" description="Extracellular" evidence="3">
    <location>
        <begin position="22"/>
        <end position="4419"/>
    </location>
</feature>
<feature type="transmembrane region" description="Helical" evidence="3">
    <location>
        <begin position="4420"/>
        <end position="4443"/>
    </location>
</feature>
<feature type="topological domain" description="Cytoplasmic" evidence="3">
    <location>
        <begin position="4444"/>
        <end position="4543"/>
    </location>
</feature>
<feature type="domain" description="LDL-receptor class A 1" evidence="5">
    <location>
        <begin position="27"/>
        <end position="68"/>
    </location>
</feature>
<feature type="domain" description="LDL-receptor class A 2" evidence="5">
    <location>
        <begin position="72"/>
        <end position="112"/>
    </location>
</feature>
<feature type="domain" description="EGF-like 1" evidence="4">
    <location>
        <begin position="113"/>
        <end position="151"/>
    </location>
</feature>
<feature type="domain" description="EGF-like 2; calcium-binding" evidence="4">
    <location>
        <begin position="152"/>
        <end position="191"/>
    </location>
</feature>
<feature type="repeat" description="LDL-receptor class B 1">
    <location>
        <begin position="294"/>
        <end position="336"/>
    </location>
</feature>
<feature type="repeat" description="LDL-receptor class B 2">
    <location>
        <begin position="337"/>
        <end position="380"/>
    </location>
</feature>
<feature type="repeat" description="LDL-receptor class B 3">
    <location>
        <begin position="381"/>
        <end position="424"/>
    </location>
</feature>
<feature type="domain" description="EGF-like 3" evidence="4">
    <location>
        <begin position="476"/>
        <end position="522"/>
    </location>
</feature>
<feature type="repeat" description="LDL-receptor class B 4">
    <location>
        <begin position="573"/>
        <end position="615"/>
    </location>
</feature>
<feature type="repeat" description="LDL-receptor class B 5">
    <location>
        <begin position="616"/>
        <end position="661"/>
    </location>
</feature>
<feature type="repeat" description="LDL-receptor class B 6">
    <location>
        <begin position="662"/>
        <end position="712"/>
    </location>
</feature>
<feature type="repeat" description="LDL-receptor class B 7">
    <location>
        <begin position="713"/>
        <end position="756"/>
    </location>
</feature>
<feature type="domain" description="EGF-like 4" evidence="4">
    <location>
        <begin position="801"/>
        <end position="841"/>
    </location>
</feature>
<feature type="domain" description="LDL-receptor class A 3" evidence="5">
    <location>
        <begin position="850"/>
        <end position="890"/>
    </location>
</feature>
<feature type="domain" description="LDL-receptor class A 4" evidence="5">
    <location>
        <begin position="891"/>
        <end position="931"/>
    </location>
</feature>
<feature type="domain" description="LDL-receptor class A 5" evidence="5">
    <location>
        <begin position="932"/>
        <end position="971"/>
    </location>
</feature>
<feature type="domain" description="LDL-receptor class A 6" evidence="5">
    <location>
        <begin position="972"/>
        <end position="1011"/>
    </location>
</feature>
<feature type="domain" description="LDL-receptor class A 7" evidence="5">
    <location>
        <begin position="1011"/>
        <end position="1051"/>
    </location>
</feature>
<feature type="domain" description="LDL-receptor class A 8" evidence="5">
    <location>
        <begin position="1058"/>
        <end position="1097"/>
    </location>
</feature>
<feature type="domain" description="LDL-receptor class A 9" evidence="5">
    <location>
        <begin position="1100"/>
        <end position="1140"/>
    </location>
</feature>
<feature type="domain" description="LDL-receptor class A 10" evidence="5">
    <location>
        <begin position="1141"/>
        <end position="1180"/>
    </location>
</feature>
<feature type="domain" description="EGF-like 5" evidence="4">
    <location>
        <begin position="1181"/>
        <end position="1220"/>
    </location>
</feature>
<feature type="domain" description="EGF-like 6" evidence="4">
    <location>
        <begin position="1221"/>
        <end position="1260"/>
    </location>
</feature>
<feature type="repeat" description="LDL-receptor class B 8">
    <location>
        <begin position="1307"/>
        <end position="1353"/>
    </location>
</feature>
<feature type="repeat" description="LDL-receptor class B 9">
    <location>
        <begin position="1354"/>
        <end position="1396"/>
    </location>
</feature>
<feature type="repeat" description="LDL-receptor class B 10">
    <location>
        <begin position="1397"/>
        <end position="1443"/>
    </location>
</feature>
<feature type="repeat" description="LDL-receptor class B 11">
    <location>
        <begin position="1444"/>
        <end position="1488"/>
    </location>
</feature>
<feature type="repeat" description="LDL-receptor class B 12">
    <location>
        <begin position="1489"/>
        <end position="1529"/>
    </location>
</feature>
<feature type="domain" description="EGF-like 7" evidence="4">
    <location>
        <begin position="1534"/>
        <end position="1577"/>
    </location>
</feature>
<feature type="repeat" description="LDL-receptor class B 13">
    <location>
        <begin position="1625"/>
        <end position="1667"/>
    </location>
</feature>
<feature type="repeat" description="LDL-receptor class B 14">
    <location>
        <begin position="1668"/>
        <end position="1711"/>
    </location>
</feature>
<feature type="repeat" description="LDL-receptor class B 15">
    <location>
        <begin position="1712"/>
        <end position="1751"/>
    </location>
</feature>
<feature type="repeat" description="LDL-receptor class B 16">
    <location>
        <begin position="1752"/>
        <end position="1796"/>
    </location>
</feature>
<feature type="domain" description="EGF-like 8" evidence="4">
    <location>
        <begin position="1842"/>
        <end position="1883"/>
    </location>
</feature>
<feature type="repeat" description="LDL-receptor class B 17">
    <location>
        <begin position="1930"/>
        <end position="1972"/>
    </location>
</feature>
<feature type="repeat" description="LDL-receptor class B 18">
    <location>
        <begin position="1973"/>
        <end position="2015"/>
    </location>
</feature>
<feature type="repeat" description="LDL-receptor class B 19">
    <location>
        <begin position="2016"/>
        <end position="2059"/>
    </location>
</feature>
<feature type="repeat" description="LDL-receptor class B 20">
    <location>
        <begin position="2060"/>
        <end position="2103"/>
    </location>
</feature>
<feature type="domain" description="EGF-like 9" evidence="4">
    <location>
        <begin position="2151"/>
        <end position="2191"/>
    </location>
</feature>
<feature type="repeat" description="LDL-receptor class B 21">
    <location>
        <begin position="2247"/>
        <end position="2288"/>
    </location>
</feature>
<feature type="repeat" description="LDL-receptor class B 22">
    <location>
        <begin position="2289"/>
        <end position="2337"/>
    </location>
</feature>
<feature type="repeat" description="LDL-receptor class B 23">
    <location>
        <begin position="2338"/>
        <end position="2382"/>
    </location>
</feature>
<feature type="repeat" description="LDL-receptor class B 24">
    <location>
        <begin position="2383"/>
        <end position="2425"/>
    </location>
</feature>
<feature type="repeat" description="LDL-receptor class B 25">
    <location>
        <begin position="2426"/>
        <end position="2467"/>
    </location>
</feature>
<feature type="domain" description="EGF-like 10" evidence="4">
    <location>
        <begin position="2472"/>
        <end position="2512"/>
    </location>
</feature>
<feature type="domain" description="LDL-receptor class A 11" evidence="5">
    <location>
        <begin position="2516"/>
        <end position="2557"/>
    </location>
</feature>
<feature type="domain" description="LDL-receptor class A 12" evidence="5">
    <location>
        <begin position="2558"/>
        <end position="2596"/>
    </location>
</feature>
<feature type="domain" description="LDL-receptor class A 13" evidence="5">
    <location>
        <begin position="2597"/>
        <end position="2635"/>
    </location>
</feature>
<feature type="domain" description="LDL-receptor class A 14" evidence="5">
    <location>
        <begin position="2636"/>
        <end position="2684"/>
    </location>
</feature>
<feature type="domain" description="LDL-receptor class A 15" evidence="5">
    <location>
        <begin position="2688"/>
        <end position="2730"/>
    </location>
</feature>
<feature type="domain" description="LDL-receptor class A 16" evidence="5">
    <location>
        <begin position="2730"/>
        <end position="2769"/>
    </location>
</feature>
<feature type="domain" description="LDL-receptor class A 17" evidence="5">
    <location>
        <begin position="2770"/>
        <end position="2812"/>
    </location>
</feature>
<feature type="domain" description="LDL-receptor class A 18" evidence="5">
    <location>
        <begin position="2814"/>
        <end position="2853"/>
    </location>
</feature>
<feature type="domain" description="LDL-receptor class A 19" evidence="5">
    <location>
        <begin position="2854"/>
        <end position="2897"/>
    </location>
</feature>
<feature type="domain" description="LDL-receptor class A 20" evidence="5">
    <location>
        <begin position="2900"/>
        <end position="2938"/>
    </location>
</feature>
<feature type="domain" description="EGF-like 11" evidence="4">
    <location>
        <begin position="2939"/>
        <end position="2978"/>
    </location>
</feature>
<feature type="domain" description="EGF-like 12; calcium-binding" evidence="4">
    <location>
        <begin position="2979"/>
        <end position="3019"/>
    </location>
</feature>
<feature type="repeat" description="LDL-receptor class B 26">
    <location>
        <begin position="3066"/>
        <end position="3110"/>
    </location>
</feature>
<feature type="repeat" description="LDL-receptor class B 27">
    <location>
        <begin position="3111"/>
        <end position="3153"/>
    </location>
</feature>
<feature type="repeat" description="LDL-receptor class B 28">
    <location>
        <begin position="3154"/>
        <end position="3197"/>
    </location>
</feature>
<feature type="repeat" description="LDL-receptor class B 29">
    <location>
        <begin position="3198"/>
        <end position="3240"/>
    </location>
</feature>
<feature type="repeat" description="LDL-receptor class B 30">
    <location>
        <begin position="3241"/>
        <end position="3281"/>
    </location>
</feature>
<feature type="domain" description="EGF-like 13" evidence="4">
    <location>
        <begin position="3287"/>
        <end position="3328"/>
    </location>
</feature>
<feature type="domain" description="LDL-receptor class A 21" evidence="5">
    <location>
        <begin position="3329"/>
        <end position="3368"/>
    </location>
</feature>
<feature type="domain" description="LDL-receptor class A 22" evidence="5">
    <location>
        <begin position="3369"/>
        <end position="3407"/>
    </location>
</feature>
<feature type="domain" description="LDL-receptor class A 23" evidence="5">
    <location>
        <begin position="3408"/>
        <end position="3447"/>
    </location>
</feature>
<feature type="domain" description="LDL-receptor class A 24" evidence="5">
    <location>
        <begin position="3448"/>
        <end position="3488"/>
    </location>
</feature>
<feature type="domain" description="LDL-receptor class A 25" evidence="5">
    <location>
        <begin position="3489"/>
        <end position="3530"/>
    </location>
</feature>
<feature type="domain" description="LDL-receptor class A 26" evidence="5">
    <location>
        <begin position="3531"/>
        <end position="3569"/>
    </location>
</feature>
<feature type="domain" description="LDL-receptor class A 27" evidence="5">
    <location>
        <begin position="3570"/>
        <end position="3608"/>
    </location>
</feature>
<feature type="domain" description="LDL-receptor class A 28" evidence="5">
    <location>
        <begin position="3608"/>
        <end position="3646"/>
    </location>
</feature>
<feature type="domain" description="LDL-receptor class A 29" evidence="5">
    <location>
        <begin position="3649"/>
        <end position="3689"/>
    </location>
</feature>
<feature type="domain" description="LDL-receptor class A 30" evidence="5">
    <location>
        <begin position="3690"/>
        <end position="3730"/>
    </location>
</feature>
<feature type="domain" description="LDL-receptor class A 31" evidence="5">
    <location>
        <begin position="3736"/>
        <end position="3776"/>
    </location>
</feature>
<feature type="domain" description="EGF-like 14" evidence="4">
    <location>
        <begin position="3779"/>
        <end position="3821"/>
    </location>
</feature>
<feature type="domain" description="EGF-like 15" evidence="4">
    <location>
        <begin position="3822"/>
        <end position="3859"/>
    </location>
</feature>
<feature type="repeat" description="LDL-receptor class B 31">
    <location>
        <begin position="3910"/>
        <end position="3952"/>
    </location>
</feature>
<feature type="repeat" description="LDL-receptor class B 32">
    <location>
        <begin position="3969"/>
        <end position="4011"/>
    </location>
</feature>
<feature type="repeat" description="LDL-receptor class B 33">
    <location>
        <begin position="4012"/>
        <end position="4055"/>
    </location>
</feature>
<feature type="repeat" description="LDL-receptor class B 34">
    <location>
        <begin position="4056"/>
        <end position="4100"/>
    </location>
</feature>
<feature type="domain" description="EGF-like 16" evidence="4">
    <location>
        <begin position="4146"/>
        <end position="4182"/>
    </location>
</feature>
<feature type="domain" description="EGF-like 17" evidence="4">
    <location>
        <begin position="4195"/>
        <end position="4231"/>
    </location>
</feature>
<feature type="domain" description="EGF-like 18" evidence="4">
    <location>
        <begin position="4231"/>
        <end position="4267"/>
    </location>
</feature>
<feature type="domain" description="EGF-like 19" evidence="4">
    <location>
        <begin position="4267"/>
        <end position="4303"/>
    </location>
</feature>
<feature type="domain" description="EGF-like 20" evidence="4">
    <location>
        <begin position="4303"/>
        <end position="4339"/>
    </location>
</feature>
<feature type="domain" description="EGF-like 21" evidence="4">
    <location>
        <begin position="4339"/>
        <end position="4374"/>
    </location>
</feature>
<feature type="domain" description="EGF-like 22" evidence="4">
    <location>
        <begin position="4372"/>
        <end position="4409"/>
    </location>
</feature>
<feature type="region of interest" description="Disordered" evidence="6">
    <location>
        <begin position="4522"/>
        <end position="4543"/>
    </location>
</feature>
<feature type="short sequence motif" description="Recognition site for proteolytical processing" evidence="3">
    <location>
        <begin position="3939"/>
        <end position="3942"/>
    </location>
</feature>
<feature type="short sequence motif" description="NPXY motif">
    <location>
        <begin position="4501"/>
        <end position="4506"/>
    </location>
</feature>
<feature type="compositionally biased region" description="Basic and acidic residues" evidence="6">
    <location>
        <begin position="4523"/>
        <end position="4535"/>
    </location>
</feature>
<feature type="binding site" evidence="1">
    <location>
        <position position="869"/>
    </location>
    <ligand>
        <name>Ca(2+)</name>
        <dbReference type="ChEBI" id="CHEBI:29108"/>
        <label>1</label>
    </ligand>
</feature>
<feature type="binding site" evidence="1">
    <location>
        <position position="872"/>
    </location>
    <ligand>
        <name>Ca(2+)</name>
        <dbReference type="ChEBI" id="CHEBI:29108"/>
        <label>1</label>
    </ligand>
</feature>
<feature type="binding site" evidence="1">
    <location>
        <position position="874"/>
    </location>
    <ligand>
        <name>Ca(2+)</name>
        <dbReference type="ChEBI" id="CHEBI:29108"/>
        <label>1</label>
    </ligand>
</feature>
<feature type="binding site" evidence="1">
    <location>
        <position position="876"/>
    </location>
    <ligand>
        <name>Ca(2+)</name>
        <dbReference type="ChEBI" id="CHEBI:29108"/>
        <label>1</label>
    </ligand>
</feature>
<feature type="binding site" evidence="1">
    <location>
        <position position="882"/>
    </location>
    <ligand>
        <name>Ca(2+)</name>
        <dbReference type="ChEBI" id="CHEBI:29108"/>
        <label>1</label>
    </ligand>
</feature>
<feature type="binding site" evidence="1">
    <location>
        <position position="883"/>
    </location>
    <ligand>
        <name>Ca(2+)</name>
        <dbReference type="ChEBI" id="CHEBI:29108"/>
        <label>1</label>
    </ligand>
</feature>
<feature type="binding site" evidence="1">
    <location>
        <position position="1030"/>
    </location>
    <ligand>
        <name>Ca(2+)</name>
        <dbReference type="ChEBI" id="CHEBI:29108"/>
        <label>2</label>
    </ligand>
</feature>
<feature type="binding site" evidence="1">
    <location>
        <position position="1033"/>
    </location>
    <ligand>
        <name>Ca(2+)</name>
        <dbReference type="ChEBI" id="CHEBI:29108"/>
        <label>2</label>
    </ligand>
</feature>
<feature type="binding site" evidence="1">
    <location>
        <position position="1035"/>
    </location>
    <ligand>
        <name>Ca(2+)</name>
        <dbReference type="ChEBI" id="CHEBI:29108"/>
        <label>2</label>
    </ligand>
</feature>
<feature type="binding site" evidence="1">
    <location>
        <position position="1037"/>
    </location>
    <ligand>
        <name>Ca(2+)</name>
        <dbReference type="ChEBI" id="CHEBI:29108"/>
        <label>2</label>
    </ligand>
</feature>
<feature type="binding site" evidence="1">
    <location>
        <position position="1043"/>
    </location>
    <ligand>
        <name>Ca(2+)</name>
        <dbReference type="ChEBI" id="CHEBI:29108"/>
        <label>2</label>
    </ligand>
</feature>
<feature type="binding site" evidence="1">
    <location>
        <position position="1044"/>
    </location>
    <ligand>
        <name>Ca(2+)</name>
        <dbReference type="ChEBI" id="CHEBI:29108"/>
        <label>2</label>
    </ligand>
</feature>
<feature type="binding site" evidence="1">
    <location>
        <position position="1078"/>
    </location>
    <ligand>
        <name>Ca(2+)</name>
        <dbReference type="ChEBI" id="CHEBI:29108"/>
        <label>3</label>
    </ligand>
</feature>
<feature type="binding site" evidence="1">
    <location>
        <position position="1081"/>
    </location>
    <ligand>
        <name>Ca(2+)</name>
        <dbReference type="ChEBI" id="CHEBI:29108"/>
        <label>3</label>
    </ligand>
</feature>
<feature type="binding site" evidence="1">
    <location>
        <position position="1083"/>
    </location>
    <ligand>
        <name>Ca(2+)</name>
        <dbReference type="ChEBI" id="CHEBI:29108"/>
        <label>3</label>
    </ligand>
</feature>
<feature type="binding site" evidence="1">
    <location>
        <position position="1085"/>
    </location>
    <ligand>
        <name>Ca(2+)</name>
        <dbReference type="ChEBI" id="CHEBI:29108"/>
        <label>3</label>
    </ligand>
</feature>
<feature type="binding site" evidence="1">
    <location>
        <position position="1091"/>
    </location>
    <ligand>
        <name>Ca(2+)</name>
        <dbReference type="ChEBI" id="CHEBI:29108"/>
        <label>3</label>
    </ligand>
</feature>
<feature type="binding site" evidence="1">
    <location>
        <position position="1092"/>
    </location>
    <ligand>
        <name>Ca(2+)</name>
        <dbReference type="ChEBI" id="CHEBI:29108"/>
        <label>3</label>
    </ligand>
</feature>
<feature type="glycosylation site" description="N-linked (GlcNAc...) asparagine" evidence="3">
    <location>
        <position position="116"/>
    </location>
</feature>
<feature type="glycosylation site" description="N-linked (GlcNAc...) asparagine" evidence="3">
    <location>
        <position position="138"/>
    </location>
</feature>
<feature type="glycosylation site" description="N-linked (GlcNAc...) asparagine" evidence="3">
    <location>
        <position position="187"/>
    </location>
</feature>
<feature type="glycosylation site" description="N-linked (GlcNAc...) asparagine" evidence="3">
    <location>
        <position position="276"/>
    </location>
</feature>
<feature type="glycosylation site" description="N-linked (GlcNAc...) asparagine" evidence="3">
    <location>
        <position position="359"/>
    </location>
</feature>
<feature type="glycosylation site" description="N-linked (GlcNAc...) asparagine" evidence="3">
    <location>
        <position position="448"/>
    </location>
</feature>
<feature type="glycosylation site" description="N-linked (GlcNAc...) asparagine" evidence="3">
    <location>
        <position position="731"/>
    </location>
</feature>
<feature type="glycosylation site" description="N-linked (GlcNAc...) asparagine" evidence="3">
    <location>
        <position position="926"/>
    </location>
</feature>
<feature type="glycosylation site" description="N-linked (GlcNAc...) asparagine" evidence="3">
    <location>
        <position position="1048"/>
    </location>
</feature>
<feature type="glycosylation site" description="N-linked (GlcNAc...) asparagine" evidence="3">
    <location>
        <position position="1152"/>
    </location>
</feature>
<feature type="glycosylation site" description="N-linked (GlcNAc...) asparagine" evidence="3">
    <location>
        <position position="1153"/>
    </location>
</feature>
<feature type="glycosylation site" description="N-linked (GlcNAc...) asparagine" evidence="3">
    <location>
        <position position="1193"/>
    </location>
</feature>
<feature type="glycosylation site" description="N-linked (GlcNAc...) asparagine" evidence="3">
    <location>
        <position position="1216"/>
    </location>
</feature>
<feature type="glycosylation site" description="N-linked (GlcNAc...) asparagine" evidence="3">
    <location>
        <position position="1305"/>
    </location>
</feature>
<feature type="glycosylation site" description="N-linked (GlcNAc...) asparagine" evidence="3">
    <location>
        <position position="1509"/>
    </location>
</feature>
<feature type="glycosylation site" description="N-linked (GlcNAc...) asparagine" evidence="3">
    <location>
        <position position="1556"/>
    </location>
</feature>
<feature type="glycosylation site" description="N-linked (GlcNAc...) asparagine" evidence="3">
    <location>
        <position position="1573"/>
    </location>
</feature>
<feature type="glycosylation site" description="N-linked (GlcNAc...) asparagine" evidence="3">
    <location>
        <position position="1614"/>
    </location>
</feature>
<feature type="glycosylation site" description="N-linked (GlcNAc...) asparagine" evidence="3">
    <location>
        <position position="1643"/>
    </location>
</feature>
<feature type="glycosylation site" description="N-linked (GlcNAc...) asparagine" evidence="3">
    <location>
        <position position="1721"/>
    </location>
</feature>
<feature type="glycosylation site" description="N-linked (GlcNAc...) asparagine" evidence="3">
    <location>
        <position position="1731"/>
    </location>
</feature>
<feature type="glycosylation site" description="N-linked (GlcNAc...) asparagine" evidence="3">
    <location>
        <position position="1761"/>
    </location>
</feature>
<feature type="glycosylation site" description="N-linked (GlcNAc...) asparagine" evidence="3">
    <location>
        <position position="1823"/>
    </location>
</feature>
<feature type="glycosylation site" description="N-linked (GlcNAc...) asparagine" evidence="3">
    <location>
        <position position="1929"/>
    </location>
</feature>
<feature type="glycosylation site" description="N-linked (GlcNAc...) asparagine" evidence="3">
    <location>
        <position position="1991"/>
    </location>
</feature>
<feature type="glycosylation site" description="N-linked (GlcNAc...) asparagine" evidence="3">
    <location>
        <position position="2044"/>
    </location>
</feature>
<feature type="glycosylation site" description="N-linked (GlcNAc...) asparagine" evidence="3">
    <location>
        <position position="2113"/>
    </location>
</feature>
<feature type="glycosylation site" description="N-linked (GlcNAc...) asparagine" evidence="3">
    <location>
        <position position="2123"/>
    </location>
</feature>
<feature type="glycosylation site" description="N-linked (GlcNAc...) asparagine" evidence="3">
    <location>
        <position position="2466"/>
    </location>
</feature>
<feature type="glycosylation site" description="N-linked (GlcNAc...) asparagine" evidence="3">
    <location>
        <position position="2496"/>
    </location>
</feature>
<feature type="glycosylation site" description="N-linked (GlcNAc...) asparagine" evidence="3">
    <location>
        <position position="2515"/>
    </location>
</feature>
<feature type="glycosylation site" description="N-linked (GlcNAc...) asparagine" evidence="3">
    <location>
        <position position="2595"/>
    </location>
</feature>
<feature type="glycosylation site" description="N-linked (GlcNAc...) asparagine" evidence="3">
    <location>
        <position position="2614"/>
    </location>
</feature>
<feature type="glycosylation site" description="N-linked (GlcNAc...) asparagine" evidence="3">
    <location>
        <position position="2632"/>
    </location>
</feature>
<feature type="glycosylation site" description="N-linked (GlcNAc...) asparagine" evidence="3">
    <location>
        <position position="2813"/>
    </location>
</feature>
<feature type="glycosylation site" description="N-linked (GlcNAc...) asparagine" evidence="3">
    <location>
        <position position="2903"/>
    </location>
</feature>
<feature type="glycosylation site" description="N-linked (GlcNAc...) asparagine" evidence="3">
    <location>
        <position position="3045"/>
    </location>
</feature>
<feature type="glycosylation site" description="N-linked (GlcNAc...) asparagine" evidence="3">
    <location>
        <position position="3086"/>
    </location>
</feature>
<feature type="glycosylation site" description="N-linked (GlcNAc...) asparagine" evidence="3">
    <location>
        <position position="3176"/>
    </location>
</feature>
<feature type="glycosylation site" description="N-linked (GlcNAc...) asparagine" evidence="3">
    <location>
        <position position="3261"/>
    </location>
</feature>
<feature type="glycosylation site" description="N-linked (GlcNAc...) asparagine" evidence="3">
    <location>
        <position position="3330"/>
    </location>
</feature>
<feature type="glycosylation site" description="N-linked (GlcNAc...) asparagine" evidence="3">
    <location>
        <position position="3485"/>
    </location>
</feature>
<feature type="glycosylation site" description="N-linked (GlcNAc...) asparagine" evidence="3">
    <location>
        <position position="3659"/>
    </location>
</feature>
<feature type="glycosylation site" description="N-linked (GlcNAc...) asparagine" evidence="3">
    <location>
        <position position="3786"/>
    </location>
</feature>
<feature type="glycosylation site" description="N-linked (GlcNAc...) asparagine" evidence="3">
    <location>
        <position position="3837"/>
    </location>
</feature>
<feature type="glycosylation site" description="N-linked (GlcNAc...) asparagine" evidence="3">
    <location>
        <position position="3952"/>
    </location>
</feature>
<feature type="glycosylation site" description="N-linked (GlcNAc...) asparagine" evidence="3">
    <location>
        <position position="4074"/>
    </location>
</feature>
<feature type="glycosylation site" description="N-linked (GlcNAc...) asparagine" evidence="3">
    <location>
        <position position="4124"/>
    </location>
</feature>
<feature type="glycosylation site" description="N-linked (GlcNAc...) asparagine" evidence="3">
    <location>
        <position position="4178"/>
    </location>
</feature>
<feature type="glycosylation site" description="N-linked (GlcNAc...) asparagine" evidence="3">
    <location>
        <position position="4278"/>
    </location>
</feature>
<feature type="disulfide bond" evidence="1">
    <location>
        <begin position="29"/>
        <end position="42"/>
    </location>
</feature>
<feature type="disulfide bond" evidence="1">
    <location>
        <begin position="36"/>
        <end position="55"/>
    </location>
</feature>
<feature type="disulfide bond" evidence="1">
    <location>
        <begin position="49"/>
        <end position="66"/>
    </location>
</feature>
<feature type="disulfide bond" evidence="1">
    <location>
        <begin position="74"/>
        <end position="87"/>
    </location>
</feature>
<feature type="disulfide bond" evidence="1">
    <location>
        <begin position="81"/>
        <end position="100"/>
    </location>
</feature>
<feature type="disulfide bond" evidence="1">
    <location>
        <begin position="94"/>
        <end position="110"/>
    </location>
</feature>
<feature type="disulfide bond" evidence="1">
    <location>
        <begin position="117"/>
        <end position="126"/>
    </location>
</feature>
<feature type="disulfide bond" evidence="1">
    <location>
        <begin position="122"/>
        <end position="135"/>
    </location>
</feature>
<feature type="disulfide bond" evidence="1">
    <location>
        <begin position="137"/>
        <end position="150"/>
    </location>
</feature>
<feature type="disulfide bond" evidence="1">
    <location>
        <begin position="156"/>
        <end position="166"/>
    </location>
</feature>
<feature type="disulfide bond" evidence="1">
    <location>
        <begin position="162"/>
        <end position="175"/>
    </location>
</feature>
<feature type="disulfide bond" evidence="1">
    <location>
        <begin position="177"/>
        <end position="190"/>
    </location>
</feature>
<feature type="disulfide bond" evidence="1">
    <location>
        <begin position="480"/>
        <end position="495"/>
    </location>
</feature>
<feature type="disulfide bond" evidence="1">
    <location>
        <begin position="491"/>
        <end position="506"/>
    </location>
</feature>
<feature type="disulfide bond" evidence="1">
    <location>
        <begin position="508"/>
        <end position="521"/>
    </location>
</feature>
<feature type="disulfide bond" evidence="1">
    <location>
        <begin position="805"/>
        <end position="816"/>
    </location>
</feature>
<feature type="disulfide bond" evidence="1">
    <location>
        <begin position="812"/>
        <end position="825"/>
    </location>
</feature>
<feature type="disulfide bond" evidence="1">
    <location>
        <begin position="827"/>
        <end position="840"/>
    </location>
</feature>
<feature type="disulfide bond" evidence="1">
    <location>
        <begin position="852"/>
        <end position="864"/>
    </location>
</feature>
<feature type="disulfide bond" evidence="1">
    <location>
        <begin position="859"/>
        <end position="877"/>
    </location>
</feature>
<feature type="disulfide bond" evidence="1">
    <location>
        <begin position="871"/>
        <end position="888"/>
    </location>
</feature>
<feature type="disulfide bond" evidence="1">
    <location>
        <begin position="893"/>
        <end position="905"/>
    </location>
</feature>
<feature type="disulfide bond" evidence="1">
    <location>
        <begin position="900"/>
        <end position="918"/>
    </location>
</feature>
<feature type="disulfide bond" evidence="1">
    <location>
        <begin position="912"/>
        <end position="929"/>
    </location>
</feature>
<feature type="disulfide bond" evidence="1">
    <location>
        <begin position="934"/>
        <end position="946"/>
    </location>
</feature>
<feature type="disulfide bond" evidence="1">
    <location>
        <begin position="941"/>
        <end position="959"/>
    </location>
</feature>
<feature type="disulfide bond" evidence="1">
    <location>
        <begin position="953"/>
        <end position="969"/>
    </location>
</feature>
<feature type="disulfide bond" evidence="1">
    <location>
        <begin position="974"/>
        <end position="987"/>
    </location>
</feature>
<feature type="disulfide bond" evidence="1">
    <location>
        <begin position="982"/>
        <end position="1000"/>
    </location>
</feature>
<feature type="disulfide bond" evidence="1">
    <location>
        <begin position="994"/>
        <end position="1009"/>
    </location>
</feature>
<feature type="disulfide bond" evidence="1">
    <location>
        <begin position="1013"/>
        <end position="1025"/>
    </location>
</feature>
<feature type="disulfide bond" evidence="1">
    <location>
        <begin position="1020"/>
        <end position="1038"/>
    </location>
</feature>
<feature type="disulfide bond" evidence="1">
    <location>
        <begin position="1032"/>
        <end position="1049"/>
    </location>
</feature>
<feature type="disulfide bond" evidence="1">
    <location>
        <begin position="1060"/>
        <end position="1073"/>
    </location>
</feature>
<feature type="disulfide bond" evidence="1">
    <location>
        <begin position="1067"/>
        <end position="1086"/>
    </location>
</feature>
<feature type="disulfide bond" evidence="1">
    <location>
        <begin position="1080"/>
        <end position="1095"/>
    </location>
</feature>
<feature type="disulfide bond" evidence="1">
    <location>
        <begin position="1102"/>
        <end position="1116"/>
    </location>
</feature>
<feature type="disulfide bond" evidence="1">
    <location>
        <begin position="1110"/>
        <end position="1129"/>
    </location>
</feature>
<feature type="disulfide bond" evidence="1">
    <location>
        <begin position="1123"/>
        <end position="1138"/>
    </location>
</feature>
<feature type="disulfide bond" evidence="1">
    <location>
        <begin position="1143"/>
        <end position="1157"/>
    </location>
</feature>
<feature type="disulfide bond" evidence="1">
    <location>
        <begin position="1150"/>
        <end position="1170"/>
    </location>
</feature>
<feature type="disulfide bond" evidence="1">
    <location>
        <begin position="1164"/>
        <end position="1180"/>
    </location>
</feature>
<feature type="disulfide bond" evidence="1">
    <location>
        <begin position="1183"/>
        <end position="1194"/>
    </location>
</feature>
<feature type="disulfide bond" evidence="1">
    <location>
        <begin position="1190"/>
        <end position="1204"/>
    </location>
</feature>
<feature type="disulfide bond" evidence="1">
    <location>
        <begin position="1206"/>
        <end position="1219"/>
    </location>
</feature>
<feature type="disulfide bond" evidence="1">
    <location>
        <begin position="1225"/>
        <end position="1235"/>
    </location>
</feature>
<feature type="disulfide bond" evidence="1">
    <location>
        <begin position="1231"/>
        <end position="1244"/>
    </location>
</feature>
<feature type="disulfide bond" evidence="1">
    <location>
        <begin position="1246"/>
        <end position="1259"/>
    </location>
</feature>
<feature type="disulfide bond" evidence="1">
    <location>
        <begin position="1538"/>
        <end position="1551"/>
    </location>
</feature>
<feature type="disulfide bond" evidence="1">
    <location>
        <begin position="1547"/>
        <end position="1561"/>
    </location>
</feature>
<feature type="disulfide bond" evidence="1">
    <location>
        <begin position="1563"/>
        <end position="1576"/>
    </location>
</feature>
<feature type="disulfide bond" evidence="1">
    <location>
        <begin position="1846"/>
        <end position="1857"/>
    </location>
</feature>
<feature type="disulfide bond" evidence="1">
    <location>
        <begin position="1853"/>
        <end position="1867"/>
    </location>
</feature>
<feature type="disulfide bond" evidence="1">
    <location>
        <begin position="1869"/>
        <end position="1882"/>
    </location>
</feature>
<feature type="disulfide bond" evidence="1">
    <location>
        <begin position="2155"/>
        <end position="2166"/>
    </location>
</feature>
<feature type="disulfide bond" evidence="1">
    <location>
        <begin position="2162"/>
        <end position="2176"/>
    </location>
</feature>
<feature type="disulfide bond" evidence="1">
    <location>
        <begin position="2178"/>
        <end position="2190"/>
    </location>
</feature>
<feature type="disulfide bond" evidence="1">
    <location>
        <begin position="2476"/>
        <end position="2487"/>
    </location>
</feature>
<feature type="disulfide bond" evidence="1">
    <location>
        <begin position="2483"/>
        <end position="2497"/>
    </location>
</feature>
<feature type="disulfide bond" evidence="1">
    <location>
        <begin position="2499"/>
        <end position="2511"/>
    </location>
</feature>
<feature type="disulfide bond" evidence="1">
    <location>
        <begin position="2518"/>
        <end position="2531"/>
    </location>
</feature>
<feature type="disulfide bond" evidence="1">
    <location>
        <begin position="2526"/>
        <end position="2544"/>
    </location>
</feature>
<feature type="disulfide bond" evidence="1">
    <location>
        <begin position="2538"/>
        <end position="2555"/>
    </location>
</feature>
<feature type="disulfide bond" evidence="1">
    <location>
        <begin position="2560"/>
        <end position="2572"/>
    </location>
</feature>
<feature type="disulfide bond" evidence="1">
    <location>
        <begin position="2567"/>
        <end position="2585"/>
    </location>
</feature>
<feature type="disulfide bond" evidence="1">
    <location>
        <begin position="2579"/>
        <end position="2594"/>
    </location>
</feature>
<feature type="disulfide bond" evidence="1">
    <location>
        <begin position="2599"/>
        <end position="2611"/>
    </location>
</feature>
<feature type="disulfide bond" evidence="1">
    <location>
        <begin position="2606"/>
        <end position="2624"/>
    </location>
</feature>
<feature type="disulfide bond" evidence="1">
    <location>
        <begin position="2618"/>
        <end position="2633"/>
    </location>
</feature>
<feature type="disulfide bond" evidence="1">
    <location>
        <begin position="2638"/>
        <end position="2660"/>
    </location>
</feature>
<feature type="disulfide bond" evidence="1">
    <location>
        <begin position="2654"/>
        <end position="2673"/>
    </location>
</feature>
<feature type="disulfide bond" evidence="1">
    <location>
        <begin position="2667"/>
        <end position="2682"/>
    </location>
</feature>
<feature type="disulfide bond" evidence="1">
    <location>
        <begin position="2690"/>
        <end position="2702"/>
    </location>
</feature>
<feature type="disulfide bond" evidence="1">
    <location>
        <begin position="2697"/>
        <end position="2715"/>
    </location>
</feature>
<feature type="disulfide bond" evidence="1">
    <location>
        <begin position="2709"/>
        <end position="2724"/>
    </location>
</feature>
<feature type="disulfide bond" evidence="1">
    <location>
        <begin position="2732"/>
        <end position="2744"/>
    </location>
</feature>
<feature type="disulfide bond" evidence="1">
    <location>
        <begin position="2739"/>
        <end position="2757"/>
    </location>
</feature>
<feature type="disulfide bond" evidence="1">
    <location>
        <begin position="2751"/>
        <end position="2767"/>
    </location>
</feature>
<feature type="disulfide bond" evidence="1">
    <location>
        <begin position="2772"/>
        <end position="2785"/>
    </location>
</feature>
<feature type="disulfide bond" evidence="1">
    <location>
        <begin position="2779"/>
        <end position="2798"/>
    </location>
</feature>
<feature type="disulfide bond" evidence="1">
    <location>
        <begin position="2792"/>
        <end position="2810"/>
    </location>
</feature>
<feature type="disulfide bond" evidence="1">
    <location>
        <begin position="2816"/>
        <end position="2828"/>
    </location>
</feature>
<feature type="disulfide bond" evidence="1">
    <location>
        <begin position="2823"/>
        <end position="2841"/>
    </location>
</feature>
<feature type="disulfide bond" evidence="1">
    <location>
        <begin position="2835"/>
        <end position="2851"/>
    </location>
</feature>
<feature type="disulfide bond" evidence="1">
    <location>
        <begin position="2856"/>
        <end position="2868"/>
    </location>
</feature>
<feature type="disulfide bond" evidence="1">
    <location>
        <begin position="2863"/>
        <end position="2882"/>
    </location>
</feature>
<feature type="disulfide bond" evidence="1">
    <location>
        <begin position="2876"/>
        <end position="2895"/>
    </location>
</feature>
<feature type="disulfide bond" evidence="1">
    <location>
        <begin position="2902"/>
        <end position="2914"/>
    </location>
</feature>
<feature type="disulfide bond" evidence="1">
    <location>
        <begin position="2909"/>
        <end position="2927"/>
    </location>
</feature>
<feature type="disulfide bond" evidence="1">
    <location>
        <begin position="2921"/>
        <end position="2936"/>
    </location>
</feature>
<feature type="disulfide bond" evidence="1">
    <location>
        <begin position="2941"/>
        <end position="2953"/>
    </location>
</feature>
<feature type="disulfide bond" evidence="1">
    <location>
        <begin position="2949"/>
        <end position="2962"/>
    </location>
</feature>
<feature type="disulfide bond" evidence="1">
    <location>
        <begin position="2964"/>
        <end position="2977"/>
    </location>
</feature>
<feature type="disulfide bond" evidence="1">
    <location>
        <begin position="2983"/>
        <end position="2993"/>
    </location>
</feature>
<feature type="disulfide bond" evidence="1">
    <location>
        <begin position="2989"/>
        <end position="3002"/>
    </location>
</feature>
<feature type="disulfide bond" evidence="1">
    <location>
        <begin position="3004"/>
        <end position="3018"/>
    </location>
</feature>
<feature type="disulfide bond" evidence="1">
    <location>
        <begin position="3291"/>
        <end position="3302"/>
    </location>
</feature>
<feature type="disulfide bond" evidence="1">
    <location>
        <begin position="3298"/>
        <end position="3312"/>
    </location>
</feature>
<feature type="disulfide bond" evidence="1">
    <location>
        <begin position="3314"/>
        <end position="3327"/>
    </location>
</feature>
<feature type="disulfide bond" evidence="1">
    <location>
        <begin position="3331"/>
        <end position="3343"/>
    </location>
</feature>
<feature type="disulfide bond" evidence="1">
    <location>
        <begin position="3338"/>
        <end position="3356"/>
    </location>
</feature>
<feature type="disulfide bond" evidence="1">
    <location>
        <begin position="3350"/>
        <end position="3366"/>
    </location>
</feature>
<feature type="disulfide bond" evidence="1">
    <location>
        <begin position="3371"/>
        <end position="3383"/>
    </location>
</feature>
<feature type="disulfide bond" evidence="1">
    <location>
        <begin position="3378"/>
        <end position="3396"/>
    </location>
</feature>
<feature type="disulfide bond" evidence="1">
    <location>
        <begin position="3390"/>
        <end position="3405"/>
    </location>
</feature>
<feature type="disulfide bond" evidence="1">
    <location>
        <begin position="3410"/>
        <end position="3423"/>
    </location>
</feature>
<feature type="disulfide bond" evidence="1">
    <location>
        <begin position="3417"/>
        <end position="3436"/>
    </location>
</feature>
<feature type="disulfide bond" evidence="1">
    <location>
        <begin position="3430"/>
        <end position="3445"/>
    </location>
</feature>
<feature type="disulfide bond" evidence="1">
    <location>
        <begin position="3450"/>
        <end position="3463"/>
    </location>
</feature>
<feature type="disulfide bond" evidence="1">
    <location>
        <begin position="3457"/>
        <end position="3476"/>
    </location>
</feature>
<feature type="disulfide bond" evidence="1">
    <location>
        <begin position="3470"/>
        <end position="3486"/>
    </location>
</feature>
<feature type="disulfide bond" evidence="1">
    <location>
        <begin position="3491"/>
        <end position="3504"/>
    </location>
</feature>
<feature type="disulfide bond" evidence="1">
    <location>
        <begin position="3498"/>
        <end position="3517"/>
    </location>
</feature>
<feature type="disulfide bond" evidence="1">
    <location>
        <begin position="3511"/>
        <end position="3528"/>
    </location>
</feature>
<feature type="disulfide bond" evidence="1">
    <location>
        <begin position="3533"/>
        <end position="3545"/>
    </location>
</feature>
<feature type="disulfide bond" evidence="1">
    <location>
        <begin position="3540"/>
        <end position="3558"/>
    </location>
</feature>
<feature type="disulfide bond" evidence="1">
    <location>
        <begin position="3552"/>
        <end position="3567"/>
    </location>
</feature>
<feature type="disulfide bond" evidence="1">
    <location>
        <begin position="3572"/>
        <end position="3584"/>
    </location>
</feature>
<feature type="disulfide bond" evidence="1">
    <location>
        <begin position="3579"/>
        <end position="3597"/>
    </location>
</feature>
<feature type="disulfide bond" evidence="1">
    <location>
        <begin position="3591"/>
        <end position="3606"/>
    </location>
</feature>
<feature type="disulfide bond" evidence="1">
    <location>
        <begin position="3610"/>
        <end position="3622"/>
    </location>
</feature>
<feature type="disulfide bond" evidence="1">
    <location>
        <begin position="3617"/>
        <end position="3635"/>
    </location>
</feature>
<feature type="disulfide bond" evidence="1">
    <location>
        <begin position="3629"/>
        <end position="3644"/>
    </location>
</feature>
<feature type="disulfide bond" evidence="1">
    <location>
        <begin position="3658"/>
        <end position="3676"/>
    </location>
</feature>
<feature type="disulfide bond" evidence="1">
    <location>
        <begin position="3670"/>
        <end position="3687"/>
    </location>
</feature>
<feature type="disulfide bond" evidence="1">
    <location>
        <begin position="3692"/>
        <end position="3706"/>
    </location>
</feature>
<feature type="disulfide bond" evidence="1">
    <location>
        <begin position="3700"/>
        <end position="3719"/>
    </location>
</feature>
<feature type="disulfide bond" evidence="1">
    <location>
        <begin position="3713"/>
        <end position="3728"/>
    </location>
</feature>
<feature type="disulfide bond" evidence="1">
    <location>
        <begin position="3738"/>
        <end position="3752"/>
    </location>
</feature>
<feature type="disulfide bond" evidence="1">
    <location>
        <begin position="3747"/>
        <end position="3765"/>
    </location>
</feature>
<feature type="disulfide bond" evidence="1">
    <location>
        <begin position="3759"/>
        <end position="3774"/>
    </location>
</feature>
<feature type="disulfide bond" evidence="1">
    <location>
        <begin position="3783"/>
        <end position="3796"/>
    </location>
</feature>
<feature type="disulfide bond" evidence="1">
    <location>
        <begin position="3790"/>
        <end position="3805"/>
    </location>
</feature>
<feature type="disulfide bond" evidence="1">
    <location>
        <begin position="3807"/>
        <end position="3820"/>
    </location>
</feature>
<feature type="disulfide bond" evidence="1">
    <location>
        <begin position="3826"/>
        <end position="3836"/>
    </location>
</feature>
<feature type="disulfide bond" evidence="1">
    <location>
        <begin position="3832"/>
        <end position="3845"/>
    </location>
</feature>
<feature type="disulfide bond" evidence="1">
    <location>
        <begin position="3847"/>
        <end position="3858"/>
    </location>
</feature>
<feature type="disulfide bond" evidence="1">
    <location>
        <begin position="4150"/>
        <end position="4159"/>
    </location>
</feature>
<feature type="disulfide bond" evidence="1">
    <location>
        <begin position="4155"/>
        <end position="4168"/>
    </location>
</feature>
<feature type="disulfide bond" evidence="1">
    <location>
        <begin position="4170"/>
        <end position="4181"/>
    </location>
</feature>
<feature type="disulfide bond" evidence="1">
    <location>
        <begin position="4199"/>
        <end position="4209"/>
    </location>
</feature>
<feature type="disulfide bond" evidence="1">
    <location>
        <begin position="4203"/>
        <end position="4219"/>
    </location>
</feature>
<feature type="disulfide bond" evidence="1">
    <location>
        <begin position="4221"/>
        <end position="4230"/>
    </location>
</feature>
<feature type="disulfide bond" evidence="1">
    <location>
        <begin position="4235"/>
        <end position="4245"/>
    </location>
</feature>
<feature type="disulfide bond" evidence="1">
    <location>
        <begin position="4239"/>
        <end position="4255"/>
    </location>
</feature>
<feature type="disulfide bond" evidence="1">
    <location>
        <begin position="4257"/>
        <end position="4266"/>
    </location>
</feature>
<feature type="disulfide bond" evidence="1">
    <location>
        <begin position="4271"/>
        <end position="4281"/>
    </location>
</feature>
<feature type="disulfide bond" evidence="1">
    <location>
        <begin position="4275"/>
        <end position="4291"/>
    </location>
</feature>
<feature type="disulfide bond" evidence="1">
    <location>
        <begin position="4293"/>
        <end position="4302"/>
    </location>
</feature>
<feature type="disulfide bond" evidence="1">
    <location>
        <begin position="4307"/>
        <end position="4317"/>
    </location>
</feature>
<feature type="disulfide bond" evidence="1">
    <location>
        <begin position="4311"/>
        <end position="4327"/>
    </location>
</feature>
<feature type="disulfide bond" evidence="1">
    <location>
        <begin position="4329"/>
        <end position="4338"/>
    </location>
</feature>
<feature type="disulfide bond" evidence="1">
    <location>
        <begin position="4343"/>
        <end position="4351"/>
    </location>
</feature>
<feature type="disulfide bond" evidence="1">
    <location>
        <begin position="4346"/>
        <end position="4362"/>
    </location>
</feature>
<feature type="disulfide bond" evidence="1">
    <location>
        <begin position="4364"/>
        <end position="4373"/>
    </location>
</feature>
<feature type="disulfide bond" evidence="1">
    <location>
        <begin position="4376"/>
        <end position="4386"/>
    </location>
</feature>
<feature type="disulfide bond" evidence="1">
    <location>
        <begin position="4380"/>
        <end position="4397"/>
    </location>
</feature>
<feature type="disulfide bond" evidence="1">
    <location>
        <begin position="4399"/>
        <end position="4408"/>
    </location>
</feature>
<feature type="splice variant" id="VSP_004312" description="In isoform 2." evidence="7">
    <original>SERQD</original>
    <variation>N</variation>
    <location>
        <begin position="2725"/>
        <end position="2729"/>
    </location>
</feature>
<evidence type="ECO:0000250" key="1"/>
<evidence type="ECO:0000250" key="2">
    <source>
        <dbReference type="UniProtKB" id="Q07954"/>
    </source>
</evidence>
<evidence type="ECO:0000255" key="3"/>
<evidence type="ECO:0000255" key="4">
    <source>
        <dbReference type="PROSITE-ProRule" id="PRU00076"/>
    </source>
</evidence>
<evidence type="ECO:0000255" key="5">
    <source>
        <dbReference type="PROSITE-ProRule" id="PRU00124"/>
    </source>
</evidence>
<evidence type="ECO:0000256" key="6">
    <source>
        <dbReference type="SAM" id="MobiDB-lite"/>
    </source>
</evidence>
<evidence type="ECO:0000303" key="7">
    <source>
    </source>
</evidence>
<evidence type="ECO:0000305" key="8"/>
<keyword id="KW-0025">Alternative splicing</keyword>
<keyword id="KW-0106">Calcium</keyword>
<keyword id="KW-0168">Coated pit</keyword>
<keyword id="KW-1015">Disulfide bond</keyword>
<keyword id="KW-0245">EGF-like domain</keyword>
<keyword id="KW-0254">Endocytosis</keyword>
<keyword id="KW-0325">Glycoprotein</keyword>
<keyword id="KW-0472">Membrane</keyword>
<keyword id="KW-0479">Metal-binding</keyword>
<keyword id="KW-0675">Receptor</keyword>
<keyword id="KW-1185">Reference proteome</keyword>
<keyword id="KW-0677">Repeat</keyword>
<keyword id="KW-0732">Signal</keyword>
<keyword id="KW-0812">Transmembrane</keyword>
<keyword id="KW-1133">Transmembrane helix</keyword>
<name>LRP1_CHICK</name>
<dbReference type="EMBL" id="X74904">
    <property type="protein sequence ID" value="CAA52870.1"/>
    <property type="molecule type" value="mRNA"/>
</dbReference>
<dbReference type="PIR" id="A53102">
    <property type="entry name" value="A53102"/>
</dbReference>
<dbReference type="RefSeq" id="NP_990573.1">
    <property type="nucleotide sequence ID" value="NM_205242.1"/>
</dbReference>
<dbReference type="SMR" id="P98157"/>
<dbReference type="FunCoup" id="P98157">
    <property type="interactions" value="1240"/>
</dbReference>
<dbReference type="STRING" id="9031.ENSGALP00000056506"/>
<dbReference type="GlyCosmos" id="P98157">
    <property type="glycosylation" value="50 sites, No reported glycans"/>
</dbReference>
<dbReference type="GlyGen" id="P98157">
    <property type="glycosylation" value="52 sites"/>
</dbReference>
<dbReference type="PaxDb" id="9031-ENSGALP00000040865"/>
<dbReference type="GeneID" id="396170"/>
<dbReference type="KEGG" id="gga:396170"/>
<dbReference type="CTD" id="4035"/>
<dbReference type="VEuPathDB" id="HostDB:geneid_396170"/>
<dbReference type="eggNOG" id="KOG1215">
    <property type="taxonomic scope" value="Eukaryota"/>
</dbReference>
<dbReference type="InParanoid" id="P98157"/>
<dbReference type="OrthoDB" id="10066840at2759"/>
<dbReference type="PhylomeDB" id="P98157"/>
<dbReference type="PRO" id="PR:P98157"/>
<dbReference type="Proteomes" id="UP000000539">
    <property type="component" value="Unassembled WGS sequence"/>
</dbReference>
<dbReference type="GO" id="GO:0005905">
    <property type="term" value="C:clathrin-coated pit"/>
    <property type="evidence" value="ECO:0007669"/>
    <property type="project" value="UniProtKB-KW"/>
</dbReference>
<dbReference type="GO" id="GO:0016964">
    <property type="term" value="F:alpha-2 macroglobulin receptor activity"/>
    <property type="evidence" value="ECO:0000250"/>
    <property type="project" value="UniProtKB"/>
</dbReference>
<dbReference type="GO" id="GO:0005509">
    <property type="term" value="F:calcium ion binding"/>
    <property type="evidence" value="ECO:0007669"/>
    <property type="project" value="InterPro"/>
</dbReference>
<dbReference type="GO" id="GO:0006897">
    <property type="term" value="P:endocytosis"/>
    <property type="evidence" value="ECO:0007669"/>
    <property type="project" value="UniProtKB-KW"/>
</dbReference>
<dbReference type="CDD" id="cd00054">
    <property type="entry name" value="EGF_CA"/>
    <property type="match status" value="2"/>
</dbReference>
<dbReference type="CDD" id="cd00112">
    <property type="entry name" value="LDLa"/>
    <property type="match status" value="30"/>
</dbReference>
<dbReference type="FunFam" id="2.10.25.10:FF:000204">
    <property type="entry name" value="LDL receptor related protein 1"/>
    <property type="match status" value="1"/>
</dbReference>
<dbReference type="FunFam" id="4.10.400.10:FF:000022">
    <property type="entry name" value="LDL receptor related protein 1"/>
    <property type="match status" value="1"/>
</dbReference>
<dbReference type="FunFam" id="2.120.10.30:FF:000012">
    <property type="entry name" value="Low density lipoprotein receptor-related protein 1"/>
    <property type="match status" value="1"/>
</dbReference>
<dbReference type="FunFam" id="4.10.400.10:FF:000007">
    <property type="entry name" value="Low density lipoprotein receptor-related protein 1"/>
    <property type="match status" value="1"/>
</dbReference>
<dbReference type="FunFam" id="4.10.400.10:FF:000008">
    <property type="entry name" value="Low density lipoprotein receptor-related protein 1"/>
    <property type="match status" value="1"/>
</dbReference>
<dbReference type="FunFam" id="4.10.400.10:FF:000021">
    <property type="entry name" value="Low density lipoprotein receptor-related protein 1"/>
    <property type="match status" value="1"/>
</dbReference>
<dbReference type="FunFam" id="4.10.400.10:FF:000023">
    <property type="entry name" value="Low density lipoprotein receptor-related protein 1"/>
    <property type="match status" value="1"/>
</dbReference>
<dbReference type="FunFam" id="2.120.10.30:FF:000010">
    <property type="entry name" value="Low density lipoprotein receptor-related protein 1B"/>
    <property type="match status" value="1"/>
</dbReference>
<dbReference type="FunFam" id="2.10.25.10:FF:000129">
    <property type="entry name" value="Low-density lipoprotein receptor-related protein 1"/>
    <property type="match status" value="1"/>
</dbReference>
<dbReference type="FunFam" id="2.10.25.10:FF:000144">
    <property type="entry name" value="Low-density lipoprotein receptor-related protein 1"/>
    <property type="match status" value="1"/>
</dbReference>
<dbReference type="FunFam" id="2.10.25.10:FF:000505">
    <property type="entry name" value="Low-density lipoprotein receptor-related protein 1"/>
    <property type="match status" value="1"/>
</dbReference>
<dbReference type="FunFam" id="2.120.10.30:FF:000014">
    <property type="entry name" value="Low-density lipoprotein receptor-related protein 1"/>
    <property type="match status" value="1"/>
</dbReference>
<dbReference type="FunFam" id="2.120.10.30:FF:000015">
    <property type="entry name" value="Low-density lipoprotein receptor-related protein 1"/>
    <property type="match status" value="1"/>
</dbReference>
<dbReference type="FunFam" id="2.120.10.30:FF:000018">
    <property type="entry name" value="Low-density lipoprotein receptor-related protein 1"/>
    <property type="match status" value="1"/>
</dbReference>
<dbReference type="FunFam" id="2.120.10.30:FF:000019">
    <property type="entry name" value="Low-density lipoprotein receptor-related protein 1"/>
    <property type="match status" value="1"/>
</dbReference>
<dbReference type="FunFam" id="4.10.400.10:FF:000001">
    <property type="entry name" value="Low-density lipoprotein receptor-related protein 1"/>
    <property type="match status" value="1"/>
</dbReference>
<dbReference type="FunFam" id="4.10.400.10:FF:000002">
    <property type="entry name" value="Low-density lipoprotein receptor-related protein 1"/>
    <property type="match status" value="2"/>
</dbReference>
<dbReference type="FunFam" id="4.10.400.10:FF:000004">
    <property type="entry name" value="Low-density lipoprotein receptor-related protein 1"/>
    <property type="match status" value="1"/>
</dbReference>
<dbReference type="FunFam" id="4.10.400.10:FF:000009">
    <property type="entry name" value="Low-density lipoprotein receptor-related protein 1"/>
    <property type="match status" value="1"/>
</dbReference>
<dbReference type="FunFam" id="4.10.400.10:FF:000010">
    <property type="entry name" value="Low-density lipoprotein receptor-related protein 1"/>
    <property type="match status" value="1"/>
</dbReference>
<dbReference type="FunFam" id="4.10.400.10:FF:000011">
    <property type="entry name" value="Low-density lipoprotein receptor-related protein 1"/>
    <property type="match status" value="2"/>
</dbReference>
<dbReference type="FunFam" id="4.10.400.10:FF:000012">
    <property type="entry name" value="Low-density lipoprotein receptor-related protein 1"/>
    <property type="match status" value="1"/>
</dbReference>
<dbReference type="FunFam" id="4.10.400.10:FF:000015">
    <property type="entry name" value="Low-density lipoprotein receptor-related protein 1"/>
    <property type="match status" value="2"/>
</dbReference>
<dbReference type="FunFam" id="4.10.400.10:FF:000018">
    <property type="entry name" value="Low-density lipoprotein receptor-related protein 1"/>
    <property type="match status" value="1"/>
</dbReference>
<dbReference type="FunFam" id="4.10.400.10:FF:000026">
    <property type="entry name" value="Low-density lipoprotein receptor-related protein 1"/>
    <property type="match status" value="1"/>
</dbReference>
<dbReference type="FunFam" id="4.10.400.10:FF:000031">
    <property type="entry name" value="Low-density lipoprotein receptor-related protein 1"/>
    <property type="match status" value="1"/>
</dbReference>
<dbReference type="FunFam" id="2.10.25.10:FF:000072">
    <property type="entry name" value="Low-density lipoprotein receptor-related protein 1B"/>
    <property type="match status" value="1"/>
</dbReference>
<dbReference type="FunFam" id="4.10.400.10:FF:000073">
    <property type="entry name" value="Low-density lipoprotein receptor-related protein 1B"/>
    <property type="match status" value="1"/>
</dbReference>
<dbReference type="FunFam" id="4.10.400.10:FF:000005">
    <property type="entry name" value="low-density lipoprotein receptor-related protein 1B"/>
    <property type="match status" value="1"/>
</dbReference>
<dbReference type="FunFam" id="2.120.10.30:FF:000020">
    <property type="entry name" value="Prolow-density lipoprotein receptor-related protein 1"/>
    <property type="match status" value="1"/>
</dbReference>
<dbReference type="FunFam" id="4.10.400.10:FF:000013">
    <property type="entry name" value="Prolow-density lipoprotein receptor-related protein 1"/>
    <property type="match status" value="1"/>
</dbReference>
<dbReference type="FunFam" id="4.10.400.10:FF:000047">
    <property type="entry name" value="Prolow-density lipoprotein receptor-related protein 1"/>
    <property type="match status" value="1"/>
</dbReference>
<dbReference type="FunFam" id="4.10.400.10:FF:000059">
    <property type="entry name" value="Prolow-density lipoprotein receptor-related protein 1"/>
    <property type="match status" value="1"/>
</dbReference>
<dbReference type="FunFam" id="4.10.400.10:FF:000028">
    <property type="entry name" value="prolow-density lipoprotein receptor-related protein 1"/>
    <property type="match status" value="1"/>
</dbReference>
<dbReference type="FunFam" id="4.10.400.10:FF:000035">
    <property type="entry name" value="prolow-density lipoprotein receptor-related protein 1"/>
    <property type="match status" value="1"/>
</dbReference>
<dbReference type="FunFam" id="2.120.10.30:FF:000009">
    <property type="entry name" value="Putative low-density lipoprotein receptor-related protein 1B"/>
    <property type="match status" value="1"/>
</dbReference>
<dbReference type="FunFam" id="2.10.25.10:FF:000240">
    <property type="entry name" value="Vitamin K-dependent protein S"/>
    <property type="match status" value="1"/>
</dbReference>
<dbReference type="Gene3D" id="4.10.1220.10">
    <property type="entry name" value="EGF-type module"/>
    <property type="match status" value="1"/>
</dbReference>
<dbReference type="Gene3D" id="2.10.25.10">
    <property type="entry name" value="Laminin"/>
    <property type="match status" value="14"/>
</dbReference>
<dbReference type="Gene3D" id="4.10.400.10">
    <property type="entry name" value="Low-density Lipoprotein Receptor"/>
    <property type="match status" value="30"/>
</dbReference>
<dbReference type="Gene3D" id="2.120.10.30">
    <property type="entry name" value="TolB, C-terminal domain"/>
    <property type="match status" value="8"/>
</dbReference>
<dbReference type="InterPro" id="IPR011042">
    <property type="entry name" value="6-blade_b-propeller_TolB-like"/>
</dbReference>
<dbReference type="InterPro" id="IPR026823">
    <property type="entry name" value="cEGF"/>
</dbReference>
<dbReference type="InterPro" id="IPR001881">
    <property type="entry name" value="EGF-like_Ca-bd_dom"/>
</dbReference>
<dbReference type="InterPro" id="IPR000742">
    <property type="entry name" value="EGF-like_dom"/>
</dbReference>
<dbReference type="InterPro" id="IPR000152">
    <property type="entry name" value="EGF-type_Asp/Asn_hydroxyl_site"/>
</dbReference>
<dbReference type="InterPro" id="IPR018097">
    <property type="entry name" value="EGF_Ca-bd_CS"/>
</dbReference>
<dbReference type="InterPro" id="IPR009030">
    <property type="entry name" value="Growth_fac_rcpt_cys_sf"/>
</dbReference>
<dbReference type="InterPro" id="IPR036055">
    <property type="entry name" value="LDL_receptor-like_sf"/>
</dbReference>
<dbReference type="InterPro" id="IPR051221">
    <property type="entry name" value="LDLR-related"/>
</dbReference>
<dbReference type="InterPro" id="IPR023415">
    <property type="entry name" value="LDLR_class-A_CS"/>
</dbReference>
<dbReference type="InterPro" id="IPR000033">
    <property type="entry name" value="LDLR_classB_rpt"/>
</dbReference>
<dbReference type="InterPro" id="IPR002172">
    <property type="entry name" value="LDrepeatLR_classA_rpt"/>
</dbReference>
<dbReference type="InterPro" id="IPR032485">
    <property type="entry name" value="LRP1-like_beta_prop"/>
</dbReference>
<dbReference type="PANTHER" id="PTHR22722">
    <property type="entry name" value="LOW-DENSITY LIPOPROTEIN RECEPTOR-RELATED PROTEIN 2-RELATED"/>
    <property type="match status" value="1"/>
</dbReference>
<dbReference type="PANTHER" id="PTHR22722:SF14">
    <property type="entry name" value="MEGALIN, ISOFORM A"/>
    <property type="match status" value="1"/>
</dbReference>
<dbReference type="Pfam" id="PF12662">
    <property type="entry name" value="cEGF"/>
    <property type="match status" value="2"/>
</dbReference>
<dbReference type="Pfam" id="PF16472">
    <property type="entry name" value="DUF5050"/>
    <property type="match status" value="1"/>
</dbReference>
<dbReference type="Pfam" id="PF00008">
    <property type="entry name" value="EGF"/>
    <property type="match status" value="1"/>
</dbReference>
<dbReference type="Pfam" id="PF14670">
    <property type="entry name" value="FXa_inhibition"/>
    <property type="match status" value="5"/>
</dbReference>
<dbReference type="Pfam" id="PF00057">
    <property type="entry name" value="Ldl_recept_a"/>
    <property type="match status" value="30"/>
</dbReference>
<dbReference type="Pfam" id="PF00058">
    <property type="entry name" value="Ldl_recept_b"/>
    <property type="match status" value="12"/>
</dbReference>
<dbReference type="PRINTS" id="PR00261">
    <property type="entry name" value="LDLRECEPTOR"/>
</dbReference>
<dbReference type="SMART" id="SM00181">
    <property type="entry name" value="EGF"/>
    <property type="match status" value="24"/>
</dbReference>
<dbReference type="SMART" id="SM00179">
    <property type="entry name" value="EGF_CA"/>
    <property type="match status" value="5"/>
</dbReference>
<dbReference type="SMART" id="SM00192">
    <property type="entry name" value="LDLa"/>
    <property type="match status" value="31"/>
</dbReference>
<dbReference type="SMART" id="SM00135">
    <property type="entry name" value="LY"/>
    <property type="match status" value="37"/>
</dbReference>
<dbReference type="SUPFAM" id="SSF57196">
    <property type="entry name" value="EGF/Laminin"/>
    <property type="match status" value="9"/>
</dbReference>
<dbReference type="SUPFAM" id="SSF57184">
    <property type="entry name" value="Growth factor receptor domain"/>
    <property type="match status" value="3"/>
</dbReference>
<dbReference type="SUPFAM" id="SSF57424">
    <property type="entry name" value="LDL receptor-like module"/>
    <property type="match status" value="30"/>
</dbReference>
<dbReference type="SUPFAM" id="SSF63825">
    <property type="entry name" value="YWTD domain"/>
    <property type="match status" value="8"/>
</dbReference>
<dbReference type="PROSITE" id="PS00010">
    <property type="entry name" value="ASX_HYDROXYL"/>
    <property type="match status" value="3"/>
</dbReference>
<dbReference type="PROSITE" id="PS00022">
    <property type="entry name" value="EGF_1"/>
    <property type="match status" value="5"/>
</dbReference>
<dbReference type="PROSITE" id="PS01186">
    <property type="entry name" value="EGF_2"/>
    <property type="match status" value="7"/>
</dbReference>
<dbReference type="PROSITE" id="PS50026">
    <property type="entry name" value="EGF_3"/>
    <property type="match status" value="8"/>
</dbReference>
<dbReference type="PROSITE" id="PS01187">
    <property type="entry name" value="EGF_CA"/>
    <property type="match status" value="2"/>
</dbReference>
<dbReference type="PROSITE" id="PS01209">
    <property type="entry name" value="LDLRA_1"/>
    <property type="match status" value="27"/>
</dbReference>
<dbReference type="PROSITE" id="PS50068">
    <property type="entry name" value="LDLRA_2"/>
    <property type="match status" value="31"/>
</dbReference>
<dbReference type="PROSITE" id="PS51120">
    <property type="entry name" value="LDLRB"/>
    <property type="match status" value="34"/>
</dbReference>
<sequence>MGPLLALAGCLLALLAAPAARALEAPKTCSPKQFACKDQITCISKGWRCDGEKDCPDGSDESPDICPQSKVSRCQPNEHNCLGTELCIHMSKLCNGLHDCFDGSDEGPHCREQLANCTALGCQHHCVPTLSGPACYCNNSFQLAEDRRSCKDFDECTVYGTCSQTCTNTEGSYTCSCVEGYLLQPDNRSCKAKNEPVDRPPVLLIANSQNILATYLSGAPVPNITPTSAKQTTAMDFNYIEDTVCWVHVGDSASQTILKCAKIPNLKGFVEERSINISLSLHQVEQMAIDWLTGNFYFVDDIDDRIFVCNKNGLTCVTLLDLELYNPKGIALDPAMGKVFFTDYGQIPKVERCDMDGQNRTKLVDSKIVFPHGITLDLVSRLVYWADAYLDYIEVVDYEGKNRHTIIQGILIEHLYGLTVFENYLYATNSDNANAQQKTSVIRVNRFNSTEYQVVTRVDKGGALHIYHQRRQPTVRSHACEPDQFGKPGGCSDICLLGNSHKSRTCRCRSGFSLGSDGKSCKKPEHELFLVYGKGRPGIIRGMDMGAKVPDEHMIPIENLMNPRALDFHAETGFIYFADTTSYLIGRQKIDGTERETILKDGIHNVEGIAVDWMGNNLYWTDDGPKKTISVARLEKAAQTRKTLIEGKMTHPRAIVVDPLNGWMYWTDWEEDPKDSKRGKIERAWMDGSNRNVFITSKTVLWPNGLSLDIPAKILYWVDAFYDRIEMVYLNGTERKIVYEGPELNHAFGLCHYSSFLFWTEYRSGSIYRLDQSSKAVSLLRNERPPIFEIRMYDAQQQQVGSNKCRVNNGGCSSLCLATPRGRQCACAEDQILGADSVTCEANPSYIPPPQCQPGEFACKNNRCIQERWKCDGDNDCLDNSDEAPELCHQHTCPSDRFKCKNNRCIPNRWLCDGDNDCGNNEDESNSTCSARTCSPNQFSCASGRCIPISWTCDLDDDCGDRSDESASCAYPTCFPLTQFTCNNGRCININWRCDNDNDCGDNSDEAGCSHSCSSNQFKCNSGRCIPVHWTCDGDNDCGDYSDETHANCTNQATRPPGGCHTDEFQCRLDGLCIPMRWRCDGDTDCMDSSDEKNCEGVTHVCDPNVKFGCKDSARCISKAWVCDGDSDCEDNSDEENCESLVCKPPSHTCANNTSICLPPEKLCDGSDDCGDGSDEGELCDQCSLNNGGCSHNCTVAPGEGIVCSCPLGMELGADNKTCQIQSYCAKHLKCSQKCEQDKYNVKCSCYEGWMLEPDGESCRSLDPFKPFIIFSNRHEIRRIDLHRGDYSVLVPGLRNTIALDFHLNQSSLYWTDVVEDKIYRGKLLENGALTSFEVVIQYGLATPEGLAVDWIAGNIYWVESNLDQIEVAKLDGTMRTTLLAGDIEHPRAIALDPRYGILFWTDWDASLPRIEAASMSGAGRRTIHKETGSGGWPNGLTVDYLEKRILWIDARSDAIYSALYDGTGHIEVLRGHEYLSHPFAVTLYGGEVYWTDWRTNTLAKANKWTGHNVTVVQRTNTQPFDLQVYHPSRQPLAPNPCEANGGKGPCSHLCLINYNRTLSCACPHLMKLDKDNTTCYEFKKFLLYARQMEIRGVDIDNPYYNYIISFTVPDIDNVTVVDYDAVEQRIYWSDVRTQTIKRAFINGTGVETVVSADLPNAHGLSVDWVSRNLFWTSYDTNKKQINVARLDGSFKNAVIQGLDKPHCLVVHPLHGKLYWTDGDNISVANMDGSNRTLLFTNQRGPVGLAIDYPESKLYWISSGNGTINRCNLDGSDLEVIVAVKSQLSKATALAIMGDKLWWADQASERMGTCNKKDGTEVTVLRNSTTLVMLMKVYDESIQQAGSNPCSVNNGDCSQLCLPTSETSRSCMCTAGYSLKSGQQSCEGVGSFLLYSVHEGIRGIPLDPNDKSDALVPVSGTSLAVGIDFHAENDTIYWVDMGLSTISRAKRDQTWREDVVTNGIGRVEGIAVDWIAGNIYWTDQGFDVIEVARLNGSFRYVVISQGLDKPRAITVHPEKGYLFWTEWGQYPRIERSRLDGTERMVLVNVSISWPNGISVDYEDGKLYWCDARTDKIERIDLETGENREVVLSSDNMDMFSVSVFEDYIYWSDRTHANGSIKRGSKDNATESVSLRTGIGVQLKDIKVFNRARQKGTNVCAQNNGGCQQLCLFRGGGRRTCACAHGMLSEDGVSCRDYDGYLLYSERTILKSIHLSDENNLNAPIKPFEDAEHMKNVIALAFDYRYGTKGSNRIFYSDIHFGNIQQINDDGTGRRTIVENVGSVEGLAYHRGWDTLYWTSYTTSTITRHTVDQSRLGAFERETVITMSGDDHPRAFVLDECQNLMFWTNWNEQHPSIMRATLSGANVLIIIDQDIRTPNGLAIDHRAEKIYFSDATLDKIERCEYDGSHRHVILKSEPVHPFGLAVYGDYIFWTDWVRRAVQRANKYVGTDMKLLRVDIPQQPMGIIAVANDTDSCELSPCRVNNGGCQDLCLLTPKGHVNCSCRGERVLQEDFTCKALNSTCNVHDEFECGNGDCIDFSRTCDGVVHCKDKSDEKQSYCSSRKCKKGFLHCMNGRCVASRFWCNGVDDCGDNSDEVPCNKTSCAATEFRCRDGSCIGNSSRCNQFIDCEDASDEMNCTATDCSSYFKLGVKGTTFQKCEHTSLCYAPSWVCDGANDCGDYSDERNCPGGRKPKCPANYFACPSGRCIPMTWTCDKEDDCENGEDETHCSERQDKFCYPVQFECNNHRCISKLWVCDGADDCGDGSDEDSRCRLTTCSTGSFQCPGTYVCVPERWLCDGDKDCADGADETLAAGCLYNNTCDEREFMCGNRQCIPKHFVCDHDDDCGDGSDESPECEYPTCGPHEFRCANGRCLSNSQWECDGEFDCHDHSDEAPKNPRCSSPESKCNDSFFMCKNGKCIPEALLCDNNNDCADGSDELNCFINECLNKKLSGCSQECEDLKIGYKCRCRPGFRLKDDGKTCIDIDECSTTYPCSQKCINTLGSYKCLCIEGYKLKPDNPTSCKAVTDEEPFLIFANRYYLRKLNLDGSNYTLLKQGLNNAVALDFDYREQMIYWTDVTTQGSMIRRMHINGSNVQVLHRTGLSNPDGLAVDWVGGNLYWCDKGRDTIEVSKLNGAYRTVLVNSGLREPRALVVDVQNGYLYWTDWGDHSLIGKIGMDGTNRSVIVDTKITWPNGLTLDYINSRIYWADAREDYIEFASLDGSNRHTVLSQDIPHIFALTLFEDYIYWTDWETKSINRAHKTTGANKTLLISTLHRPMDIHIYHPYRQPDVPNHPCKTNNAGCSNLCLLSPGGGHKCACPTNFYLGSDGKTCVSNCTASQFVCKNDKCIPFWWKCDTEDDCGDRSDEPEDCPEFKCRPGQFQCSTGICTNPAFICDGDNDCQDNSDEANCDIHVCLPSQFKCTNTNRCIPGIFRCNGQDNCGDGEDEKDCPEVTCAPNQFQCAITKRCIPRVWVCDRDNDCVDGSDEPANCTQMTCGVDEFRCKDSGRCIPARWKCDGEDDCGDGSDEPKEECDERTCEPYQFRCKNNRCVPGRWQCDYDNDCGDNSDEESCTPRPCSESEFSCANGRCIAGRWKCDGDHDCADGSDEKDCIPRCEFDQYQCKNGHCIPMRWRCDADADCMDGTDEEDCGTGVRTCPLDEFQCNNTLRKPLAWKCDGEDDCGDNSDENPEECLKFQCPPNRPFRCKNDRVCLWIGRQCDGIDNCGDNTDEKDCESPTAKPKSCSQDKNEFLCENKKCISANLRCNFFDDCGDGSDEKSCSHEHKSYDCMTNTTMCGDEAQCIQAQSSTYCTCRRGFQKVPDKNSCQDVNECLRFGTCSQLCNNTKGSHVCSCAKNFMKTDNMCKAEGSEHQILYIADDNKIRSMYPFNPNSAYEPAFQGDENVRIDAMDIYVKGNKIYWTNWHTGRISYCELPASSAASTASNRNRRQIDGGVTHLNISGLKMPRGIAVDWVAGNIYWTDSGRDVIEVAQMKGENRKTLISGMIDEPHAIVVDPLRGTMYWSDWGNHPKIETAAMDGTLRETLVQDNIQWPTGLAVDYHNERLYWADAKLSVIGSIRLNGTDPVVAIDNKKGLSHPFSIDIFEDYIYGVTYINNRIFKIHKFGHKSVTNLTSGLNHATDVVLYHQYKQPEVTNPCDRKKCEWLCLLSPSGPVCTCPNGKRLDNGTCVLIPSPTASAVVPTTDTCDLVCLNGGSCFLNARKQAKCRCQPRYNGERCQINQCSDYCQNGGLCTASPSGMPTCRCPTGFTGSRCDQQVCTNYCHNNGSCTVNQGNQPNCRCPPTFIGDRCQYQQCFNYCENNGVCQMSRDGVKQCRCPPQFEGAQCQDNKCSRCQEGKCNINRQSGDVSCICPDGKIAPSCLTCDSYCLNGGTCSISDKTQLPECLCPLEVTGMRCEEFIVGEQQSGRTASIVIPILLLLLLLAVVAFAWYKWRIKGAKGFQHQRMTNGAMNVEIGNPTYKMYEGEPDDDVGELLDADFALDPDKPTNFTNPVYATLYMGAHSSRNSLASTDEKRELLARGADDDLTDPLA</sequence>
<protein>
    <recommendedName>
        <fullName>Low-density lipoprotein receptor-related protein 1</fullName>
        <shortName>LRP-1</shortName>
    </recommendedName>
    <alternativeName>
        <fullName>Alpha-2-macroglobulin receptor</fullName>
        <shortName>A2MR</shortName>
    </alternativeName>
</protein>